<sequence>MDTSRVYGNVKTFRSPGHKQASFPSLSTDACRCPHWHHLALKLGCATLILLLLTLIGLSVFVRFLVQKPLIEKCSMAAQENGTEPTGRSAILECPRHWQPHRNKCLIISQISRPWAEGLVACSMKEATLLIIENEEELKFVQNILKGRQQLFFIGLNYVQTEMTWKWINGSVLKPNILRITGSEVENSCALISHTEVFSDSCSSDNHWICQKTLKHV</sequence>
<feature type="chain" id="PRO_0000317212" description="Killer cell lectin-like receptor subfamily B member 1F">
    <location>
        <begin position="1"/>
        <end position="217"/>
    </location>
</feature>
<feature type="topological domain" description="Cytoplasmic" evidence="3">
    <location>
        <begin position="1"/>
        <end position="45"/>
    </location>
</feature>
<feature type="transmembrane region" description="Helical; Signal-anchor for type II membrane protein" evidence="3">
    <location>
        <begin position="46"/>
        <end position="66"/>
    </location>
</feature>
<feature type="topological domain" description="Extracellular" evidence="3">
    <location>
        <begin position="67"/>
        <end position="217"/>
    </location>
</feature>
<feature type="domain" description="C-type lectin" evidence="4">
    <location>
        <begin position="101"/>
        <end position="211"/>
    </location>
</feature>
<feature type="short sequence motif" description="LCK-binding motif" evidence="3">
    <location>
        <begin position="31"/>
        <end position="34"/>
    </location>
</feature>
<feature type="disulfide bond" evidence="4">
    <location>
        <begin position="122"/>
        <end position="210"/>
    </location>
</feature>
<feature type="disulfide bond" evidence="4">
    <location>
        <begin position="189"/>
        <end position="202"/>
    </location>
</feature>
<gene>
    <name evidence="2" type="primary">Klrb1f</name>
    <name evidence="9" type="synonym">Klrb1c</name>
    <name type="synonym">Nkrp1b</name>
    <name evidence="7" type="synonym">Nkrp1d</name>
    <name evidence="6" type="synonym">Nkrp1f</name>
</gene>
<organism>
    <name type="scientific">Rattus norvegicus</name>
    <name type="common">Rat</name>
    <dbReference type="NCBI Taxonomy" id="10116"/>
    <lineage>
        <taxon>Eukaryota</taxon>
        <taxon>Metazoa</taxon>
        <taxon>Chordata</taxon>
        <taxon>Craniata</taxon>
        <taxon>Vertebrata</taxon>
        <taxon>Euteleostomi</taxon>
        <taxon>Mammalia</taxon>
        <taxon>Eutheria</taxon>
        <taxon>Euarchontoglires</taxon>
        <taxon>Glires</taxon>
        <taxon>Rodentia</taxon>
        <taxon>Myomorpha</taxon>
        <taxon>Muroidea</taxon>
        <taxon>Muridae</taxon>
        <taxon>Murinae</taxon>
        <taxon>Rattus</taxon>
    </lineage>
</organism>
<dbReference type="EMBL" id="X97477">
    <property type="protein sequence ID" value="CAA66111.1"/>
    <property type="molecule type" value="mRNA"/>
</dbReference>
<dbReference type="EMBL" id="EF100679">
    <property type="protein sequence ID" value="ABO15819.1"/>
    <property type="molecule type" value="mRNA"/>
</dbReference>
<dbReference type="EMBL" id="EF100685">
    <property type="protein sequence ID" value="ABO15825.1"/>
    <property type="molecule type" value="mRNA"/>
</dbReference>
<dbReference type="RefSeq" id="NP_001078872.1">
    <property type="nucleotide sequence ID" value="NM_001085403.1"/>
</dbReference>
<dbReference type="RefSeq" id="XP_008761551.1">
    <property type="nucleotide sequence ID" value="XM_008763329.1"/>
</dbReference>
<dbReference type="RefSeq" id="XP_008761552.1">
    <property type="nucleotide sequence ID" value="XM_008763330.2"/>
</dbReference>
<dbReference type="SMR" id="Q63378"/>
<dbReference type="FunCoup" id="Q63378">
    <property type="interactions" value="6"/>
</dbReference>
<dbReference type="STRING" id="10116.ENSRNOP00000010312"/>
<dbReference type="PaxDb" id="10116-ENSRNOP00000010312"/>
<dbReference type="Ensembl" id="ENSRNOT00000010312.5">
    <property type="protein sequence ID" value="ENSRNOP00000010312.2"/>
    <property type="gene ID" value="ENSRNOG00000007811.6"/>
</dbReference>
<dbReference type="GeneID" id="683758"/>
<dbReference type="KEGG" id="rno:683758"/>
<dbReference type="AGR" id="RGD:1583336"/>
<dbReference type="CTD" id="17059"/>
<dbReference type="RGD" id="1583336">
    <property type="gene designation" value="LOC683758"/>
</dbReference>
<dbReference type="eggNOG" id="KOG4297">
    <property type="taxonomic scope" value="Eukaryota"/>
</dbReference>
<dbReference type="GeneTree" id="ENSGT00940000154685"/>
<dbReference type="HOGENOM" id="CLU_049894_8_2_1"/>
<dbReference type="InParanoid" id="Q63378"/>
<dbReference type="OMA" id="CSMKEAT"/>
<dbReference type="OrthoDB" id="538816at2759"/>
<dbReference type="PhylomeDB" id="Q63378"/>
<dbReference type="PRO" id="PR:Q63378"/>
<dbReference type="Proteomes" id="UP000002494">
    <property type="component" value="Chromosome 4"/>
</dbReference>
<dbReference type="Bgee" id="ENSRNOG00000007811">
    <property type="expression patterns" value="Expressed in spleen and 11 other cell types or tissues"/>
</dbReference>
<dbReference type="GO" id="GO:0009986">
    <property type="term" value="C:cell surface"/>
    <property type="evidence" value="ECO:0000318"/>
    <property type="project" value="GO_Central"/>
</dbReference>
<dbReference type="GO" id="GO:0005886">
    <property type="term" value="C:plasma membrane"/>
    <property type="evidence" value="ECO:0000318"/>
    <property type="project" value="GO_Central"/>
</dbReference>
<dbReference type="GO" id="GO:0030246">
    <property type="term" value="F:carbohydrate binding"/>
    <property type="evidence" value="ECO:0007669"/>
    <property type="project" value="UniProtKB-KW"/>
</dbReference>
<dbReference type="GO" id="GO:0038023">
    <property type="term" value="F:signaling receptor activity"/>
    <property type="evidence" value="ECO:0000318"/>
    <property type="project" value="GO_Central"/>
</dbReference>
<dbReference type="GO" id="GO:0042269">
    <property type="term" value="P:regulation of natural killer cell mediated cytotoxicity"/>
    <property type="evidence" value="ECO:0000318"/>
    <property type="project" value="GO_Central"/>
</dbReference>
<dbReference type="CDD" id="cd03593">
    <property type="entry name" value="CLECT_NK_receptors_like"/>
    <property type="match status" value="1"/>
</dbReference>
<dbReference type="Gene3D" id="3.10.100.10">
    <property type="entry name" value="Mannose-Binding Protein A, subunit A"/>
    <property type="match status" value="1"/>
</dbReference>
<dbReference type="InterPro" id="IPR001304">
    <property type="entry name" value="C-type_lectin-like"/>
</dbReference>
<dbReference type="InterPro" id="IPR016186">
    <property type="entry name" value="C-type_lectin-like/link_sf"/>
</dbReference>
<dbReference type="InterPro" id="IPR016187">
    <property type="entry name" value="CTDL_fold"/>
</dbReference>
<dbReference type="InterPro" id="IPR051527">
    <property type="entry name" value="KLR_subfamily_B"/>
</dbReference>
<dbReference type="InterPro" id="IPR033992">
    <property type="entry name" value="NKR-like_CTLD"/>
</dbReference>
<dbReference type="PANTHER" id="PTHR46784">
    <property type="entry name" value="KILLER CELL LECTIN-LIKE RECEPTOR SUBFAMILY B MEMBER 1"/>
    <property type="match status" value="1"/>
</dbReference>
<dbReference type="PANTHER" id="PTHR46784:SF3">
    <property type="entry name" value="KILLER CELL LECTIN-LIKE RECEPTOR SUBFAMILY B MEMBER 1F"/>
    <property type="match status" value="1"/>
</dbReference>
<dbReference type="Pfam" id="PF00059">
    <property type="entry name" value="Lectin_C"/>
    <property type="match status" value="1"/>
</dbReference>
<dbReference type="SMART" id="SM00034">
    <property type="entry name" value="CLECT"/>
    <property type="match status" value="1"/>
</dbReference>
<dbReference type="SUPFAM" id="SSF56436">
    <property type="entry name" value="C-type lectin-like"/>
    <property type="match status" value="1"/>
</dbReference>
<dbReference type="PROSITE" id="PS50041">
    <property type="entry name" value="C_TYPE_LECTIN_2"/>
    <property type="match status" value="1"/>
</dbReference>
<proteinExistence type="evidence at transcript level"/>
<accession>Q63378</accession>
<protein>
    <recommendedName>
        <fullName>Killer cell lectin-like receptor subfamily B member 1F</fullName>
    </recommendedName>
    <alternativeName>
        <fullName>Natural killer cell surface protein NKR-P1F</fullName>
    </alternativeName>
</protein>
<reference evidence="8 11" key="1">
    <citation type="journal article" date="1996" name="Nat. Immunol.">
        <title>NKR-P1dim/TCR alpha beta + T cells and natural killer cells share expression of NKR-P1A and NKR-P1D.</title>
        <authorList>
            <person name="Appasamy P.M."/>
            <person name="Kenniston T.W."/>
            <person name="Brissette-Storkus C.S."/>
            <person name="Chambers W.H."/>
        </authorList>
    </citation>
    <scope>NUCLEOTIDE SEQUENCE [MRNA]</scope>
    <scope>TISSUE SPECIFICITY</scope>
    <source>
        <strain evidence="11">Fischer 344</strain>
    </source>
</reference>
<reference evidence="9" key="2">
    <citation type="journal article" date="2007" name="Immunity">
        <title>Cytomegalovirus evasion of innate immunity by subversion of the NKR-P1B:Ocil/Clr-b missing-self axis.</title>
        <authorList>
            <person name="Voigt S."/>
            <person name="Mesci A."/>
            <person name="Ettinger J."/>
            <person name="Fine J.H."/>
            <person name="Chen P."/>
            <person name="Chou W."/>
            <person name="Carlyle J.R."/>
        </authorList>
    </citation>
    <scope>NUCLEOTIDE SEQUENCE [MRNA]</scope>
    <source>
        <strain evidence="10">Sprague-Dawley</strain>
        <strain evidence="9">WAG</strain>
        <tissue evidence="9">Spleen</tissue>
    </source>
</reference>
<name>KLRBF_RAT</name>
<evidence type="ECO:0000250" key="1"/>
<evidence type="ECO:0000250" key="2">
    <source>
        <dbReference type="UniProtKB" id="Q8VD98"/>
    </source>
</evidence>
<evidence type="ECO:0000255" key="3"/>
<evidence type="ECO:0000255" key="4">
    <source>
        <dbReference type="PROSITE-ProRule" id="PRU00040"/>
    </source>
</evidence>
<evidence type="ECO:0000269" key="5">
    <source>
    </source>
</evidence>
<evidence type="ECO:0000303" key="6">
    <source>
    </source>
</evidence>
<evidence type="ECO:0000303" key="7">
    <source>
    </source>
</evidence>
<evidence type="ECO:0000305" key="8"/>
<evidence type="ECO:0000312" key="9">
    <source>
        <dbReference type="EMBL" id="ABO15819.1"/>
    </source>
</evidence>
<evidence type="ECO:0000312" key="10">
    <source>
        <dbReference type="EMBL" id="ABO15825.1"/>
    </source>
</evidence>
<evidence type="ECO:0000312" key="11">
    <source>
        <dbReference type="EMBL" id="CAA66111.1"/>
    </source>
</evidence>
<keyword id="KW-1015">Disulfide bond</keyword>
<keyword id="KW-0430">Lectin</keyword>
<keyword id="KW-0472">Membrane</keyword>
<keyword id="KW-1185">Reference proteome</keyword>
<keyword id="KW-0735">Signal-anchor</keyword>
<keyword id="KW-0812">Transmembrane</keyword>
<keyword id="KW-1133">Transmembrane helix</keyword>
<comment type="function">
    <text evidence="1">Binds CLEC2I/Clr-g leading to activation of natural killer cells or stimulation of IL-2 production and proliferation of T-cells in response to antigen stimulation. May contribute to the formation of the immunological synapse between T-cells and antigen-presenting dendritic cells (By similarity).</text>
</comment>
<comment type="subcellular location">
    <subcellularLocation>
        <location evidence="3">Membrane</location>
        <topology evidence="3">Single-pass type II membrane protein</topology>
    </subcellularLocation>
</comment>
<comment type="tissue specificity">
    <text evidence="5">Expressed in natural killer cells and a subset of T-cells.</text>
</comment>